<dbReference type="EMBL" id="BA000019">
    <property type="protein sequence ID" value="BAB72355.1"/>
    <property type="molecule type" value="Genomic_DNA"/>
</dbReference>
<dbReference type="PIR" id="AD1856">
    <property type="entry name" value="AD1856"/>
</dbReference>
<dbReference type="SMR" id="Q8YZR0"/>
<dbReference type="STRING" id="103690.gene:10492406"/>
<dbReference type="KEGG" id="ana:alr0397"/>
<dbReference type="eggNOG" id="COG4771">
    <property type="taxonomic scope" value="Bacteria"/>
</dbReference>
<dbReference type="Proteomes" id="UP000002483">
    <property type="component" value="Chromosome"/>
</dbReference>
<dbReference type="GO" id="GO:0009279">
    <property type="term" value="C:cell outer membrane"/>
    <property type="evidence" value="ECO:0000314"/>
    <property type="project" value="UniProtKB"/>
</dbReference>
<dbReference type="GO" id="GO:0015344">
    <property type="term" value="F:siderophore uptake transmembrane transporter activity"/>
    <property type="evidence" value="ECO:0007669"/>
    <property type="project" value="TreeGrafter"/>
</dbReference>
<dbReference type="GO" id="GO:0015343">
    <property type="term" value="F:siderophore-iron transmembrane transporter activity"/>
    <property type="evidence" value="ECO:0000315"/>
    <property type="project" value="UniProtKB"/>
</dbReference>
<dbReference type="GO" id="GO:0038023">
    <property type="term" value="F:signaling receptor activity"/>
    <property type="evidence" value="ECO:0007669"/>
    <property type="project" value="InterPro"/>
</dbReference>
<dbReference type="GO" id="GO:0010106">
    <property type="term" value="P:cellular response to iron ion starvation"/>
    <property type="evidence" value="ECO:0000270"/>
    <property type="project" value="UniProtKB"/>
</dbReference>
<dbReference type="GO" id="GO:0044718">
    <property type="term" value="P:siderophore transmembrane transport"/>
    <property type="evidence" value="ECO:0000315"/>
    <property type="project" value="UniProtKB"/>
</dbReference>
<dbReference type="GO" id="GO:0033214">
    <property type="term" value="P:siderophore-dependent iron import into cell"/>
    <property type="evidence" value="ECO:0000315"/>
    <property type="project" value="UniProtKB"/>
</dbReference>
<dbReference type="CDD" id="cd01347">
    <property type="entry name" value="ligand_gated_channel"/>
    <property type="match status" value="1"/>
</dbReference>
<dbReference type="Gene3D" id="2.60.40.3500">
    <property type="match status" value="1"/>
</dbReference>
<dbReference type="Gene3D" id="2.40.170.20">
    <property type="entry name" value="TonB-dependent receptor, beta-barrel domain"/>
    <property type="match status" value="1"/>
</dbReference>
<dbReference type="Gene3D" id="2.170.130.10">
    <property type="entry name" value="TonB-dependent receptor, plug domain"/>
    <property type="match status" value="1"/>
</dbReference>
<dbReference type="InterPro" id="IPR021731">
    <property type="entry name" value="AMIN_dom"/>
</dbReference>
<dbReference type="InterPro" id="IPR012910">
    <property type="entry name" value="Plug_dom"/>
</dbReference>
<dbReference type="InterPro" id="IPR037066">
    <property type="entry name" value="Plug_dom_sf"/>
</dbReference>
<dbReference type="InterPro" id="IPR039426">
    <property type="entry name" value="TonB-dep_rcpt-like"/>
</dbReference>
<dbReference type="InterPro" id="IPR000531">
    <property type="entry name" value="TonB-dep_rcpt_b-brl"/>
</dbReference>
<dbReference type="InterPro" id="IPR036942">
    <property type="entry name" value="TonB_rcpt_b-brl_sf"/>
</dbReference>
<dbReference type="InterPro" id="IPR010105">
    <property type="entry name" value="TonB_sidphr_rcpt"/>
</dbReference>
<dbReference type="NCBIfam" id="TIGR01783">
    <property type="entry name" value="TonB-siderophor"/>
    <property type="match status" value="1"/>
</dbReference>
<dbReference type="PANTHER" id="PTHR30069:SF42">
    <property type="entry name" value="FERRIC AEROBACTIN RECEPTOR"/>
    <property type="match status" value="1"/>
</dbReference>
<dbReference type="PANTHER" id="PTHR30069">
    <property type="entry name" value="TONB-DEPENDENT OUTER MEMBRANE RECEPTOR"/>
    <property type="match status" value="1"/>
</dbReference>
<dbReference type="Pfam" id="PF11741">
    <property type="entry name" value="AMIN"/>
    <property type="match status" value="1"/>
</dbReference>
<dbReference type="Pfam" id="PF07715">
    <property type="entry name" value="Plug"/>
    <property type="match status" value="1"/>
</dbReference>
<dbReference type="Pfam" id="PF00593">
    <property type="entry name" value="TonB_dep_Rec_b-barrel"/>
    <property type="match status" value="1"/>
</dbReference>
<dbReference type="SUPFAM" id="SSF56935">
    <property type="entry name" value="Porins"/>
    <property type="match status" value="1"/>
</dbReference>
<dbReference type="PROSITE" id="PS52016">
    <property type="entry name" value="TONB_DEPENDENT_REC_3"/>
    <property type="match status" value="1"/>
</dbReference>
<evidence type="ECO:0000250" key="1">
    <source>
        <dbReference type="UniProtKB" id="Q9Z3Q5"/>
    </source>
</evidence>
<evidence type="ECO:0000255" key="2">
    <source>
        <dbReference type="PROSITE-ProRule" id="PRU01360"/>
    </source>
</evidence>
<evidence type="ECO:0000256" key="3">
    <source>
        <dbReference type="SAM" id="MobiDB-lite"/>
    </source>
</evidence>
<evidence type="ECO:0000269" key="4">
    <source>
    </source>
</evidence>
<evidence type="ECO:0000269" key="5">
    <source>
    </source>
</evidence>
<evidence type="ECO:0000269" key="6">
    <source>
    </source>
</evidence>
<evidence type="ECO:0000269" key="7">
    <source>
    </source>
</evidence>
<evidence type="ECO:0000303" key="8">
    <source>
    </source>
</evidence>
<evidence type="ECO:0000305" key="9"/>
<evidence type="ECO:0000312" key="10">
    <source>
        <dbReference type="EMBL" id="BAB72355.1"/>
    </source>
</evidence>
<evidence type="ECO:0000312" key="11">
    <source>
        <dbReference type="Proteomes" id="UP000002483"/>
    </source>
</evidence>
<organism evidence="10 11">
    <name type="scientific">Nostoc sp. (strain PCC 7120 / SAG 25.82 / UTEX 2576)</name>
    <dbReference type="NCBI Taxonomy" id="103690"/>
    <lineage>
        <taxon>Bacteria</taxon>
        <taxon>Bacillati</taxon>
        <taxon>Cyanobacteriota</taxon>
        <taxon>Cyanophyceae</taxon>
        <taxon>Nostocales</taxon>
        <taxon>Nostocaceae</taxon>
        <taxon>Nostoc</taxon>
    </lineage>
</organism>
<sequence>MDCVTSHNPVATFRCEVKMKPGKILFLLLLTGSVWSLISHPGKTQEAPSPTQLNTQSPAPNAQELTQVTGVRVVPTVQGLEVILDSTAAEKLQVSTQNQGNSLIADITNAQLNLSEGNTFSQNNPATGVTNVTVVNHNDNTIRVTVTGEKSLPKFELFDSDTGLILAFTATEVAQDSPAEVDEPIELVVTATRTETPIQNVPRSITVIDREQIAAQASTSRNLIEILGKTVPGLAPPAQGASNFGLTLRGRNPQVLIDGVPQSTTRNASRDLRTIDAAAIERIEVVRGPSAIYGDGATGGVINIITRRPTEEKLTSRTEVGVSAALGNLEGDSFSTNLQHFISAKQGNFDFTFNFAVAKNGGFFDAQGDRIPSDPNAQGGFADASSINLFGKFGIDIDANQRLQLTFNRFDEKQDTDIASDPRVNTIPGRQKARALEGLSLDERPGNENTFINLQYTHDDLFNSKLQAQLYYRDYLTRFFPFDGRSFASLGNEIFQSRVESEKYGGRLQIETPLFNQGAAKLLWGVDYSQEDTSQPVSVFDQAAFVASGGLAFRKTGDRSWTPPLELRSLGLFAQLNWEISDRFVFNGGVRYENADVSVNDFRTLANPNVTIGGGDLNFNATLFNVGAVYALNPQLSVFANYAQGFSLSDIGLALRNAPPGFSVESLNPEPQKVDNYEIGIRGQWDTVQASLSAFYNESDLGTTFTAPGTVIRAPERIYGLEAAIDAQPSSTWQVGGTFTLIGGEIDSNNDGDYESLDGFRIPPLKLTAYVENETLPGWRNRLQALYSGNREVFGNNNTAFGRRPVESYLTVDYISSIKLGAGTLQLGLENLFNSQYFPVVSQLQANDSAYAAARGRTLSIKYSFDW</sequence>
<protein>
    <recommendedName>
        <fullName evidence="8">Schizokinen transporter SchT</fullName>
    </recommendedName>
    <alternativeName>
        <fullName evidence="8">TonB-dependent transporter SchT</fullName>
        <shortName evidence="9">TBDT SchT</shortName>
    </alternativeName>
</protein>
<proteinExistence type="evidence at protein level"/>
<gene>
    <name evidence="8" type="primary">schT</name>
    <name evidence="8 10" type="ordered locus">alr0397</name>
</gene>
<feature type="chain" id="PRO_0000458440" description="Schizokinen transporter SchT">
    <location>
        <begin position="1"/>
        <end position="867"/>
    </location>
</feature>
<feature type="domain" description="TBDR plug" evidence="2">
    <location>
        <begin position="197"/>
        <end position="307"/>
    </location>
</feature>
<feature type="domain" description="TBDR beta-barrel" evidence="2">
    <location>
        <begin position="313"/>
        <end position="867"/>
    </location>
</feature>
<feature type="region of interest" description="Disordered" evidence="3">
    <location>
        <begin position="40"/>
        <end position="62"/>
    </location>
</feature>
<feature type="short sequence motif" description="TonB box" evidence="1">
    <location>
        <begin position="185"/>
        <end position="192"/>
    </location>
</feature>
<feature type="short sequence motif" description="TonB C-terminal box" evidence="1">
    <location>
        <begin position="850"/>
        <end position="867"/>
    </location>
</feature>
<feature type="compositionally biased region" description="Polar residues" evidence="3">
    <location>
        <begin position="46"/>
        <end position="62"/>
    </location>
</feature>
<reference evidence="10 11" key="1">
    <citation type="journal article" date="2001" name="DNA Res.">
        <title>Complete genomic sequence of the filamentous nitrogen-fixing cyanobacterium Anabaena sp. strain PCC 7120.</title>
        <authorList>
            <person name="Kaneko T."/>
            <person name="Nakamura Y."/>
            <person name="Wolk C.P."/>
            <person name="Kuritz T."/>
            <person name="Sasamoto S."/>
            <person name="Watanabe A."/>
            <person name="Iriguchi M."/>
            <person name="Ishikawa A."/>
            <person name="Kawashima K."/>
            <person name="Kimura T."/>
            <person name="Kishida Y."/>
            <person name="Kohara M."/>
            <person name="Matsumoto M."/>
            <person name="Matsuno A."/>
            <person name="Muraki A."/>
            <person name="Nakazaki N."/>
            <person name="Shimpo S."/>
            <person name="Sugimoto M."/>
            <person name="Takazawa M."/>
            <person name="Yamada M."/>
            <person name="Yasuda M."/>
            <person name="Tabata S."/>
        </authorList>
    </citation>
    <scope>NUCLEOTIDE SEQUENCE [LARGE SCALE GENOMIC DNA]</scope>
    <source>
        <strain evidence="11">PCC 7120 / SAG 25.82 / UTEX 2576</strain>
    </source>
</reference>
<reference key="2">
    <citation type="journal article" date="2005" name="J. Proteome Res.">
        <title>Proteomic analysis of the outer membrane of Anabaena sp. strain PCC 7120.</title>
        <authorList>
            <person name="Moslavac S."/>
            <person name="Bredemeier R."/>
            <person name="Mirus O."/>
            <person name="Granvogl B."/>
            <person name="Eichacker L.A."/>
            <person name="Schleiff E."/>
        </authorList>
    </citation>
    <scope>IDENTIFICATION BY MASS SPECTROMETRY</scope>
    <scope>SUBCELLULAR LOCATION</scope>
</reference>
<reference key="3">
    <citation type="journal article" date="2007" name="Biol. Chem.">
        <title>The proteome of the heterocyst cell wall in Anabaena sp. PCC 7120.</title>
        <authorList>
            <person name="Moslavac S."/>
            <person name="Reisinger V."/>
            <person name="Berg M."/>
            <person name="Mirus O."/>
            <person name="Vosyka O."/>
            <person name="Ploescher M."/>
            <person name="Flores E."/>
            <person name="Eichacker L.A."/>
            <person name="Schleiff E."/>
        </authorList>
    </citation>
    <scope>IDENTIFICATION BY MASS SPECTROMETRY</scope>
    <scope>SUBCELLULAR LOCATION</scope>
</reference>
<reference key="4">
    <citation type="journal article" date="2008" name="J. Bacteriol.">
        <title>Alr0397 is an outer membrane transporter for the siderophore schizokinen in Anabaena sp. strain PCC 7120.</title>
        <authorList>
            <person name="Nicolaisen K."/>
            <person name="Moslavac S."/>
            <person name="Samborski A."/>
            <person name="Valdebenito M."/>
            <person name="Hantke K."/>
            <person name="Maldener I."/>
            <person name="Muro-Pastor A.M."/>
            <person name="Flores E."/>
            <person name="Schleiff E."/>
        </authorList>
    </citation>
    <scope>FUNCTION</scope>
    <scope>INDUCTION</scope>
    <scope>DISRUPTION PHENOTYPE</scope>
</reference>
<reference key="5">
    <citation type="journal article" date="2012" name="FEMS Microbiol. Lett.">
        <title>A high sensitivity iron-dependent bioreporter used to measure iron bioavailability in freshwaters.</title>
        <authorList>
            <person name="Zha S."/>
            <person name="Xu X."/>
            <person name="Hu H."/>
        </authorList>
    </citation>
    <scope>BIOTECHNOLOGY</scope>
</reference>
<name>SCHT_NOSS1</name>
<keyword id="KW-0998">Cell outer membrane</keyword>
<keyword id="KW-0406">Ion transport</keyword>
<keyword id="KW-0408">Iron</keyword>
<keyword id="KW-0410">Iron transport</keyword>
<keyword id="KW-0472">Membrane</keyword>
<keyword id="KW-1185">Reference proteome</keyword>
<keyword id="KW-0798">TonB box</keyword>
<keyword id="KW-0812">Transmembrane</keyword>
<keyword id="KW-1134">Transmembrane beta strand</keyword>
<keyword id="KW-0813">Transport</keyword>
<accession>Q8YZR0</accession>
<comment type="function">
    <text evidence="6">Involved in the TonB-dependent uptake of iron in complex with schizokinen, a dihydroxamate-type siderophore.</text>
</comment>
<comment type="subcellular location">
    <subcellularLocation>
        <location evidence="2 4 5">Cell outer membrane</location>
        <topology evidence="2">Multi-pass membrane protein</topology>
    </subcellularLocation>
</comment>
<comment type="induction">
    <text evidence="6">Expression is transiently highly up-regulated by iron starvation.</text>
</comment>
<comment type="disruption phenotype">
    <text evidence="6">Viable. Significantly decreased growth rate in liquid BG11 medium, but grows similarly to wild-type in iron- or copper-deficient BG11 medium. In iron- and copper-deficient BG medium, shows a much more pronounced retardation of growth compared to wild-type. Significantly decreased growth on media supplemented with ferric chloride, but grows similarly to wild-type on media supplemented with non-toxic concentrations of iron ammonium citrate (FeACi). Shows reduced chlorophyll fluorescence in BG11 medium similarly to wild-type in iron- and copper-deficient BG11 medium. Copper content of the cells grown in iron-deficient BG11 medium and iron content of the cells grown in BG medium is decreased compared to wild-type. Iron content of the cells grown in iron- or iron- and copper-deficient BG11 medium is similar to wild-type. Secretes siderophores on BG11 agar contrary to wild-type, but secretes less siderophores than wild-type on iron- and copper-deficient BG11 agar. Significantly less enhanced schizokinen-mediated uptake of iron compared to wild-type when grown in iron- and copper-deficient BG11 medium. No effect on heterocyst formation.</text>
</comment>
<comment type="biotechnology">
    <text evidence="7">Useful as a bioreporter in an application to sense bioavailability of iron in natural freshwaters, especially in eutrophic lakes with high iron. The application includes the V.fischeri luxAB genes fused to the promoter of this gene, and determination of dose-response relationships between luciferase activity and free ferric ion (Fe3+) concentrations to assess iron availability in water quality samples.</text>
</comment>
<comment type="similarity">
    <text evidence="2">Belongs to the TonB-dependent receptor family.</text>
</comment>